<organism>
    <name type="scientific">Rickettsia peacockii (strain Rustic)</name>
    <dbReference type="NCBI Taxonomy" id="562019"/>
    <lineage>
        <taxon>Bacteria</taxon>
        <taxon>Pseudomonadati</taxon>
        <taxon>Pseudomonadota</taxon>
        <taxon>Alphaproteobacteria</taxon>
        <taxon>Rickettsiales</taxon>
        <taxon>Rickettsiaceae</taxon>
        <taxon>Rickettsieae</taxon>
        <taxon>Rickettsia</taxon>
        <taxon>spotted fever group</taxon>
    </lineage>
</organism>
<sequence>MTKQIITLVGRPNVGKSTLFNRLSIRKKAIVHDLPGVTRDRKYTDGKIGSFEFLLIDTPGLDENPNSMGERLIEQTTKAILEADLICFMVDGRSGILPDDKLLSSFVRKYNKPAILVVNKCEKAFDFDKEYYKLGFDSMIAISAEHGTGLIDLYDEIIAKLPEEESIETNIADPIKGDCLQIVVSGRPNAGKSTFINALINDERLLTGPEAGITRESIEIDWQYKNNHIKLIDTAGLRKKSTITESLEKLSASDTINSIKFANTVILMIDALAPLKQQDLNIASHVVNEGRSIVIVVNKWDLVKESEKEAFQEEFYYQINTHLPQVKGIPVLFISAINKQNIEQVLDACLKIYKIWNKKITTSKLNEWLNFTTKAHLLPLQKGGRRVRVKYMTQTKTRPPTFKLFSNNPEKITDSYTRYLVNNMREAFDMPGIPIRFIYVKTKNPYV</sequence>
<gene>
    <name evidence="1" type="primary">der</name>
    <name type="synonym">engA</name>
    <name type="ordered locus">RPR_06365</name>
</gene>
<proteinExistence type="inferred from homology"/>
<dbReference type="EMBL" id="CP001227">
    <property type="protein sequence ID" value="ACR47798.1"/>
    <property type="molecule type" value="Genomic_DNA"/>
</dbReference>
<dbReference type="RefSeq" id="WP_012736966.1">
    <property type="nucleotide sequence ID" value="NC_012730.1"/>
</dbReference>
<dbReference type="SMR" id="C4K2K1"/>
<dbReference type="KEGG" id="rpk:RPR_06365"/>
<dbReference type="HOGENOM" id="CLU_016077_5_0_5"/>
<dbReference type="Proteomes" id="UP000005015">
    <property type="component" value="Chromosome"/>
</dbReference>
<dbReference type="GO" id="GO:0005525">
    <property type="term" value="F:GTP binding"/>
    <property type="evidence" value="ECO:0007669"/>
    <property type="project" value="UniProtKB-UniRule"/>
</dbReference>
<dbReference type="GO" id="GO:0042254">
    <property type="term" value="P:ribosome biogenesis"/>
    <property type="evidence" value="ECO:0007669"/>
    <property type="project" value="UniProtKB-KW"/>
</dbReference>
<dbReference type="CDD" id="cd01894">
    <property type="entry name" value="EngA1"/>
    <property type="match status" value="1"/>
</dbReference>
<dbReference type="CDD" id="cd01895">
    <property type="entry name" value="EngA2"/>
    <property type="match status" value="1"/>
</dbReference>
<dbReference type="FunFam" id="3.30.300.20:FF:000004">
    <property type="entry name" value="GTPase Der"/>
    <property type="match status" value="1"/>
</dbReference>
<dbReference type="Gene3D" id="3.30.300.20">
    <property type="match status" value="1"/>
</dbReference>
<dbReference type="Gene3D" id="3.40.50.300">
    <property type="entry name" value="P-loop containing nucleotide triphosphate hydrolases"/>
    <property type="match status" value="2"/>
</dbReference>
<dbReference type="HAMAP" id="MF_00195">
    <property type="entry name" value="GTPase_Der"/>
    <property type="match status" value="1"/>
</dbReference>
<dbReference type="InterPro" id="IPR031166">
    <property type="entry name" value="G_ENGA"/>
</dbReference>
<dbReference type="InterPro" id="IPR006073">
    <property type="entry name" value="GTP-bd"/>
</dbReference>
<dbReference type="InterPro" id="IPR016484">
    <property type="entry name" value="GTPase_Der"/>
</dbReference>
<dbReference type="InterPro" id="IPR032859">
    <property type="entry name" value="KH_dom-like"/>
</dbReference>
<dbReference type="InterPro" id="IPR015946">
    <property type="entry name" value="KH_dom-like_a/b"/>
</dbReference>
<dbReference type="InterPro" id="IPR027417">
    <property type="entry name" value="P-loop_NTPase"/>
</dbReference>
<dbReference type="InterPro" id="IPR005225">
    <property type="entry name" value="Small_GTP-bd"/>
</dbReference>
<dbReference type="NCBIfam" id="TIGR03594">
    <property type="entry name" value="GTPase_EngA"/>
    <property type="match status" value="1"/>
</dbReference>
<dbReference type="NCBIfam" id="TIGR00231">
    <property type="entry name" value="small_GTP"/>
    <property type="match status" value="2"/>
</dbReference>
<dbReference type="PANTHER" id="PTHR43834">
    <property type="entry name" value="GTPASE DER"/>
    <property type="match status" value="1"/>
</dbReference>
<dbReference type="PANTHER" id="PTHR43834:SF6">
    <property type="entry name" value="GTPASE DER"/>
    <property type="match status" value="1"/>
</dbReference>
<dbReference type="Pfam" id="PF14714">
    <property type="entry name" value="KH_dom-like"/>
    <property type="match status" value="1"/>
</dbReference>
<dbReference type="Pfam" id="PF01926">
    <property type="entry name" value="MMR_HSR1"/>
    <property type="match status" value="2"/>
</dbReference>
<dbReference type="PIRSF" id="PIRSF006485">
    <property type="entry name" value="GTP-binding_EngA"/>
    <property type="match status" value="1"/>
</dbReference>
<dbReference type="PRINTS" id="PR00326">
    <property type="entry name" value="GTP1OBG"/>
</dbReference>
<dbReference type="SUPFAM" id="SSF52540">
    <property type="entry name" value="P-loop containing nucleoside triphosphate hydrolases"/>
    <property type="match status" value="2"/>
</dbReference>
<dbReference type="PROSITE" id="PS51712">
    <property type="entry name" value="G_ENGA"/>
    <property type="match status" value="2"/>
</dbReference>
<name>DER_RICPU</name>
<keyword id="KW-0342">GTP-binding</keyword>
<keyword id="KW-0547">Nucleotide-binding</keyword>
<keyword id="KW-0677">Repeat</keyword>
<keyword id="KW-0690">Ribosome biogenesis</keyword>
<accession>C4K2K1</accession>
<protein>
    <recommendedName>
        <fullName evidence="1">GTPase Der</fullName>
    </recommendedName>
    <alternativeName>
        <fullName evidence="1">GTP-binding protein EngA</fullName>
    </alternativeName>
</protein>
<reference key="1">
    <citation type="journal article" date="2009" name="PLoS ONE">
        <title>Genome sequence of the endosymbiont Rickettsia peacockii and comparison with virulent Rickettsia rickettsii: identification of virulence factors.</title>
        <authorList>
            <person name="Felsheim R.F."/>
            <person name="Kurtti T.J."/>
            <person name="Munderloh U.G."/>
        </authorList>
    </citation>
    <scope>NUCLEOTIDE SEQUENCE [LARGE SCALE GENOMIC DNA]</scope>
    <source>
        <strain>Rustic</strain>
    </source>
</reference>
<feature type="chain" id="PRO_1000204047" description="GTPase Der">
    <location>
        <begin position="1"/>
        <end position="447"/>
    </location>
</feature>
<feature type="domain" description="EngA-type G 1">
    <location>
        <begin position="4"/>
        <end position="165"/>
    </location>
</feature>
<feature type="domain" description="EngA-type G 2">
    <location>
        <begin position="180"/>
        <end position="357"/>
    </location>
</feature>
<feature type="domain" description="KH-like" evidence="1">
    <location>
        <begin position="358"/>
        <end position="443"/>
    </location>
</feature>
<feature type="binding site" evidence="1">
    <location>
        <begin position="10"/>
        <end position="17"/>
    </location>
    <ligand>
        <name>GTP</name>
        <dbReference type="ChEBI" id="CHEBI:37565"/>
        <label>1</label>
    </ligand>
</feature>
<feature type="binding site" evidence="1">
    <location>
        <begin position="57"/>
        <end position="61"/>
    </location>
    <ligand>
        <name>GTP</name>
        <dbReference type="ChEBI" id="CHEBI:37565"/>
        <label>1</label>
    </ligand>
</feature>
<feature type="binding site" evidence="1">
    <location>
        <begin position="119"/>
        <end position="122"/>
    </location>
    <ligand>
        <name>GTP</name>
        <dbReference type="ChEBI" id="CHEBI:37565"/>
        <label>1</label>
    </ligand>
</feature>
<feature type="binding site" evidence="1">
    <location>
        <begin position="186"/>
        <end position="193"/>
    </location>
    <ligand>
        <name>GTP</name>
        <dbReference type="ChEBI" id="CHEBI:37565"/>
        <label>2</label>
    </ligand>
</feature>
<feature type="binding site" evidence="1">
    <location>
        <begin position="233"/>
        <end position="237"/>
    </location>
    <ligand>
        <name>GTP</name>
        <dbReference type="ChEBI" id="CHEBI:37565"/>
        <label>2</label>
    </ligand>
</feature>
<feature type="binding site" evidence="1">
    <location>
        <begin position="298"/>
        <end position="301"/>
    </location>
    <ligand>
        <name>GTP</name>
        <dbReference type="ChEBI" id="CHEBI:37565"/>
        <label>2</label>
    </ligand>
</feature>
<evidence type="ECO:0000255" key="1">
    <source>
        <dbReference type="HAMAP-Rule" id="MF_00195"/>
    </source>
</evidence>
<comment type="function">
    <text evidence="1">GTPase that plays an essential role in the late steps of ribosome biogenesis.</text>
</comment>
<comment type="subunit">
    <text evidence="1">Associates with the 50S ribosomal subunit.</text>
</comment>
<comment type="similarity">
    <text evidence="1">Belongs to the TRAFAC class TrmE-Era-EngA-EngB-Septin-like GTPase superfamily. EngA (Der) GTPase family.</text>
</comment>